<comment type="function">
    <text evidence="1">Hydrolyzes ribosome-free peptidyl-tRNAs (with 1 or more amino acids incorporated), which drop off the ribosome during protein synthesis, or as a result of ribosome stalling.</text>
</comment>
<comment type="function">
    <text evidence="1">Catalyzes the release of premature peptidyl moieties from peptidyl-tRNA molecules trapped in stalled 50S ribosomal subunits, and thus maintains levels of free tRNAs and 50S ribosomes.</text>
</comment>
<comment type="catalytic activity">
    <reaction evidence="1">
        <text>an N-acyl-L-alpha-aminoacyl-tRNA + H2O = an N-acyl-L-amino acid + a tRNA + H(+)</text>
        <dbReference type="Rhea" id="RHEA:54448"/>
        <dbReference type="Rhea" id="RHEA-COMP:10123"/>
        <dbReference type="Rhea" id="RHEA-COMP:13883"/>
        <dbReference type="ChEBI" id="CHEBI:15377"/>
        <dbReference type="ChEBI" id="CHEBI:15378"/>
        <dbReference type="ChEBI" id="CHEBI:59874"/>
        <dbReference type="ChEBI" id="CHEBI:78442"/>
        <dbReference type="ChEBI" id="CHEBI:138191"/>
        <dbReference type="EC" id="3.1.1.29"/>
    </reaction>
</comment>
<comment type="subunit">
    <text evidence="1">Monomer.</text>
</comment>
<comment type="subcellular location">
    <subcellularLocation>
        <location evidence="1">Cytoplasm</location>
    </subcellularLocation>
</comment>
<comment type="similarity">
    <text evidence="1">Belongs to the PTH family.</text>
</comment>
<gene>
    <name evidence="1" type="primary">pth</name>
    <name type="ordered locus">TM_1626</name>
</gene>
<keyword id="KW-0963">Cytoplasm</keyword>
<keyword id="KW-0378">Hydrolase</keyword>
<keyword id="KW-1185">Reference proteome</keyword>
<keyword id="KW-0694">RNA-binding</keyword>
<keyword id="KW-0820">tRNA-binding</keyword>
<organism>
    <name type="scientific">Thermotoga maritima (strain ATCC 43589 / DSM 3109 / JCM 10099 / NBRC 100826 / MSB8)</name>
    <dbReference type="NCBI Taxonomy" id="243274"/>
    <lineage>
        <taxon>Bacteria</taxon>
        <taxon>Thermotogati</taxon>
        <taxon>Thermotogota</taxon>
        <taxon>Thermotogae</taxon>
        <taxon>Thermotogales</taxon>
        <taxon>Thermotogaceae</taxon>
        <taxon>Thermotoga</taxon>
    </lineage>
</organism>
<evidence type="ECO:0000255" key="1">
    <source>
        <dbReference type="HAMAP-Rule" id="MF_00083"/>
    </source>
</evidence>
<reference key="1">
    <citation type="journal article" date="1999" name="Nature">
        <title>Evidence for lateral gene transfer between Archaea and Bacteria from genome sequence of Thermotoga maritima.</title>
        <authorList>
            <person name="Nelson K.E."/>
            <person name="Clayton R.A."/>
            <person name="Gill S.R."/>
            <person name="Gwinn M.L."/>
            <person name="Dodson R.J."/>
            <person name="Haft D.H."/>
            <person name="Hickey E.K."/>
            <person name="Peterson J.D."/>
            <person name="Nelson W.C."/>
            <person name="Ketchum K.A."/>
            <person name="McDonald L.A."/>
            <person name="Utterback T.R."/>
            <person name="Malek J.A."/>
            <person name="Linher K.D."/>
            <person name="Garrett M.M."/>
            <person name="Stewart A.M."/>
            <person name="Cotton M.D."/>
            <person name="Pratt M.S."/>
            <person name="Phillips C.A."/>
            <person name="Richardson D.L."/>
            <person name="Heidelberg J.F."/>
            <person name="Sutton G.G."/>
            <person name="Fleischmann R.D."/>
            <person name="Eisen J.A."/>
            <person name="White O."/>
            <person name="Salzberg S.L."/>
            <person name="Smith H.O."/>
            <person name="Venter J.C."/>
            <person name="Fraser C.M."/>
        </authorList>
    </citation>
    <scope>NUCLEOTIDE SEQUENCE [LARGE SCALE GENOMIC DNA]</scope>
    <source>
        <strain>ATCC 43589 / DSM 3109 / JCM 10099 / NBRC 100826 / MSB8</strain>
    </source>
</reference>
<accession>Q9X1W1</accession>
<proteinExistence type="inferred from homology"/>
<protein>
    <recommendedName>
        <fullName evidence="1">Peptidyl-tRNA hydrolase</fullName>
        <shortName evidence="1">Pth</shortName>
        <ecNumber evidence="1">3.1.1.29</ecNumber>
    </recommendedName>
</protein>
<sequence>MVVVGLGNPGPRYAFTRHNVGFLFLDFLKNKDWKTEKYFAWNKINLAGNEVALVKPLTYMNLSGLAMPHVLKFFSASLDDIIVVYDDVSLKLGKIRIRKKGSDGGHNGMKSIIQALGTQEIKRIRVGIGDKPEGMDLVNFVLGEFSDEEWIILNKVFEVMKEALEVILVEGIEKAMSIYNSLEVRA</sequence>
<name>PTH_THEMA</name>
<feature type="chain" id="PRO_0000187841" description="Peptidyl-tRNA hydrolase">
    <location>
        <begin position="1"/>
        <end position="186"/>
    </location>
</feature>
<feature type="active site" description="Proton acceptor" evidence="1">
    <location>
        <position position="18"/>
    </location>
</feature>
<feature type="binding site" evidence="1">
    <location>
        <position position="13"/>
    </location>
    <ligand>
        <name>tRNA</name>
        <dbReference type="ChEBI" id="CHEBI:17843"/>
    </ligand>
</feature>
<feature type="binding site" evidence="1">
    <location>
        <position position="59"/>
    </location>
    <ligand>
        <name>tRNA</name>
        <dbReference type="ChEBI" id="CHEBI:17843"/>
    </ligand>
</feature>
<feature type="binding site" evidence="1">
    <location>
        <position position="61"/>
    </location>
    <ligand>
        <name>tRNA</name>
        <dbReference type="ChEBI" id="CHEBI:17843"/>
    </ligand>
</feature>
<feature type="binding site" evidence="1">
    <location>
        <position position="107"/>
    </location>
    <ligand>
        <name>tRNA</name>
        <dbReference type="ChEBI" id="CHEBI:17843"/>
    </ligand>
</feature>
<feature type="site" description="Discriminates between blocked and unblocked aminoacyl-tRNA" evidence="1">
    <location>
        <position position="8"/>
    </location>
</feature>
<feature type="site" description="Stabilizes the basic form of H active site to accept a proton" evidence="1">
    <location>
        <position position="86"/>
    </location>
</feature>
<dbReference type="EC" id="3.1.1.29" evidence="1"/>
<dbReference type="EMBL" id="AE000512">
    <property type="protein sequence ID" value="AAD36693.1"/>
    <property type="molecule type" value="Genomic_DNA"/>
</dbReference>
<dbReference type="PIR" id="B72229">
    <property type="entry name" value="B72229"/>
</dbReference>
<dbReference type="RefSeq" id="NP_229426.1">
    <property type="nucleotide sequence ID" value="NC_000853.1"/>
</dbReference>
<dbReference type="RefSeq" id="WP_004082100.1">
    <property type="nucleotide sequence ID" value="NC_000853.1"/>
</dbReference>
<dbReference type="SMR" id="Q9X1W1"/>
<dbReference type="FunCoup" id="Q9X1W1">
    <property type="interactions" value="343"/>
</dbReference>
<dbReference type="STRING" id="243274.TM_1626"/>
<dbReference type="PaxDb" id="243274-THEMA_06115"/>
<dbReference type="EnsemblBacteria" id="AAD36693">
    <property type="protein sequence ID" value="AAD36693"/>
    <property type="gene ID" value="TM_1626"/>
</dbReference>
<dbReference type="KEGG" id="tma:TM1626"/>
<dbReference type="KEGG" id="tmi:THEMA_06115"/>
<dbReference type="KEGG" id="tmm:Tmari_1635"/>
<dbReference type="KEGG" id="tmw:THMA_1667"/>
<dbReference type="eggNOG" id="COG0193">
    <property type="taxonomic scope" value="Bacteria"/>
</dbReference>
<dbReference type="InParanoid" id="Q9X1W1"/>
<dbReference type="OrthoDB" id="9800507at2"/>
<dbReference type="Proteomes" id="UP000008183">
    <property type="component" value="Chromosome"/>
</dbReference>
<dbReference type="GO" id="GO:0005737">
    <property type="term" value="C:cytoplasm"/>
    <property type="evidence" value="ECO:0007669"/>
    <property type="project" value="UniProtKB-SubCell"/>
</dbReference>
<dbReference type="GO" id="GO:0004045">
    <property type="term" value="F:peptidyl-tRNA hydrolase activity"/>
    <property type="evidence" value="ECO:0000318"/>
    <property type="project" value="GO_Central"/>
</dbReference>
<dbReference type="GO" id="GO:0000049">
    <property type="term" value="F:tRNA binding"/>
    <property type="evidence" value="ECO:0007669"/>
    <property type="project" value="UniProtKB-UniRule"/>
</dbReference>
<dbReference type="GO" id="GO:0006515">
    <property type="term" value="P:protein quality control for misfolded or incompletely synthesized proteins"/>
    <property type="evidence" value="ECO:0007669"/>
    <property type="project" value="UniProtKB-UniRule"/>
</dbReference>
<dbReference type="GO" id="GO:0072344">
    <property type="term" value="P:rescue of stalled ribosome"/>
    <property type="evidence" value="ECO:0007669"/>
    <property type="project" value="UniProtKB-UniRule"/>
</dbReference>
<dbReference type="CDD" id="cd00462">
    <property type="entry name" value="PTH"/>
    <property type="match status" value="1"/>
</dbReference>
<dbReference type="FunFam" id="3.40.50.1470:FF:000001">
    <property type="entry name" value="Peptidyl-tRNA hydrolase"/>
    <property type="match status" value="1"/>
</dbReference>
<dbReference type="Gene3D" id="3.40.50.1470">
    <property type="entry name" value="Peptidyl-tRNA hydrolase"/>
    <property type="match status" value="1"/>
</dbReference>
<dbReference type="HAMAP" id="MF_00083">
    <property type="entry name" value="Pept_tRNA_hydro_bact"/>
    <property type="match status" value="1"/>
</dbReference>
<dbReference type="InterPro" id="IPR001328">
    <property type="entry name" value="Pept_tRNA_hydro"/>
</dbReference>
<dbReference type="InterPro" id="IPR018171">
    <property type="entry name" value="Pept_tRNA_hydro_CS"/>
</dbReference>
<dbReference type="InterPro" id="IPR036416">
    <property type="entry name" value="Pept_tRNA_hydro_sf"/>
</dbReference>
<dbReference type="NCBIfam" id="TIGR00447">
    <property type="entry name" value="pth"/>
    <property type="match status" value="1"/>
</dbReference>
<dbReference type="PANTHER" id="PTHR17224">
    <property type="entry name" value="PEPTIDYL-TRNA HYDROLASE"/>
    <property type="match status" value="1"/>
</dbReference>
<dbReference type="PANTHER" id="PTHR17224:SF1">
    <property type="entry name" value="PEPTIDYL-TRNA HYDROLASE"/>
    <property type="match status" value="1"/>
</dbReference>
<dbReference type="Pfam" id="PF01195">
    <property type="entry name" value="Pept_tRNA_hydro"/>
    <property type="match status" value="1"/>
</dbReference>
<dbReference type="SUPFAM" id="SSF53178">
    <property type="entry name" value="Peptidyl-tRNA hydrolase-like"/>
    <property type="match status" value="1"/>
</dbReference>
<dbReference type="PROSITE" id="PS01195">
    <property type="entry name" value="PEPT_TRNA_HYDROL_1"/>
    <property type="match status" value="1"/>
</dbReference>
<dbReference type="PROSITE" id="PS01196">
    <property type="entry name" value="PEPT_TRNA_HYDROL_2"/>
    <property type="match status" value="1"/>
</dbReference>